<organism>
    <name type="scientific">Saccharum officinarum</name>
    <name type="common">Sugarcane</name>
    <dbReference type="NCBI Taxonomy" id="4547"/>
    <lineage>
        <taxon>Eukaryota</taxon>
        <taxon>Viridiplantae</taxon>
        <taxon>Streptophyta</taxon>
        <taxon>Embryophyta</taxon>
        <taxon>Tracheophyta</taxon>
        <taxon>Spermatophyta</taxon>
        <taxon>Magnoliopsida</taxon>
        <taxon>Liliopsida</taxon>
        <taxon>Poales</taxon>
        <taxon>Poaceae</taxon>
        <taxon>PACMAD clade</taxon>
        <taxon>Panicoideae</taxon>
        <taxon>Andropogonodae</taxon>
        <taxon>Andropogoneae</taxon>
        <taxon>Saccharinae</taxon>
        <taxon>Saccharum</taxon>
        <taxon>Saccharum officinarum species complex</taxon>
    </lineage>
</organism>
<reference key="1">
    <citation type="journal article" date="2004" name="DNA Res.">
        <title>Complete nucleotide sequence of the sugarcane (Saccharum officinarum) chloroplast genome: a comparative analysis of four monocot chloroplast genomes.</title>
        <authorList>
            <person name="Asano T."/>
            <person name="Tsudzuki T."/>
            <person name="Takahashi S."/>
            <person name="Shimada H."/>
            <person name="Kadowaki K."/>
        </authorList>
    </citation>
    <scope>NUCLEOTIDE SEQUENCE [LARGE SCALE GENOMIC DNA]</scope>
</reference>
<name>PSAJ_SACOF</name>
<gene>
    <name evidence="1" type="primary">psaJ</name>
</gene>
<proteinExistence type="inferred from homology"/>
<keyword id="KW-0150">Chloroplast</keyword>
<keyword id="KW-0472">Membrane</keyword>
<keyword id="KW-0602">Photosynthesis</keyword>
<keyword id="KW-0603">Photosystem I</keyword>
<keyword id="KW-0934">Plastid</keyword>
<keyword id="KW-0793">Thylakoid</keyword>
<keyword id="KW-0812">Transmembrane</keyword>
<keyword id="KW-1133">Transmembrane helix</keyword>
<protein>
    <recommendedName>
        <fullName evidence="1">Photosystem I reaction center subunit IX</fullName>
    </recommendedName>
    <alternativeName>
        <fullName evidence="1">PSI-J</fullName>
    </alternativeName>
</protein>
<sequence>MRDIKTYLSVAPVLSTLWFGALAGLLIEINRLFPDALSFPFF</sequence>
<geneLocation type="chloroplast"/>
<evidence type="ECO:0000255" key="1">
    <source>
        <dbReference type="HAMAP-Rule" id="MF_00522"/>
    </source>
</evidence>
<accession>Q6ENU4</accession>
<dbReference type="EMBL" id="AP006714">
    <property type="protein sequence ID" value="BAD27312.1"/>
    <property type="molecule type" value="Genomic_DNA"/>
</dbReference>
<dbReference type="RefSeq" id="YP_009389590.1">
    <property type="nucleotide sequence ID" value="NC_035224.1"/>
</dbReference>
<dbReference type="SMR" id="Q6ENU4"/>
<dbReference type="GeneID" id="33347888"/>
<dbReference type="GO" id="GO:0009535">
    <property type="term" value="C:chloroplast thylakoid membrane"/>
    <property type="evidence" value="ECO:0007669"/>
    <property type="project" value="UniProtKB-SubCell"/>
</dbReference>
<dbReference type="GO" id="GO:0009522">
    <property type="term" value="C:photosystem I"/>
    <property type="evidence" value="ECO:0007669"/>
    <property type="project" value="UniProtKB-KW"/>
</dbReference>
<dbReference type="GO" id="GO:0015979">
    <property type="term" value="P:photosynthesis"/>
    <property type="evidence" value="ECO:0007669"/>
    <property type="project" value="UniProtKB-UniRule"/>
</dbReference>
<dbReference type="FunFam" id="1.20.5.510:FF:000001">
    <property type="entry name" value="Photosystem I reaction center subunit IX"/>
    <property type="match status" value="1"/>
</dbReference>
<dbReference type="Gene3D" id="1.20.5.510">
    <property type="entry name" value="Single helix bin"/>
    <property type="match status" value="1"/>
</dbReference>
<dbReference type="HAMAP" id="MF_00522">
    <property type="entry name" value="PSI_PsaJ"/>
    <property type="match status" value="1"/>
</dbReference>
<dbReference type="InterPro" id="IPR002615">
    <property type="entry name" value="PSI_PsaJ"/>
</dbReference>
<dbReference type="InterPro" id="IPR036062">
    <property type="entry name" value="PSI_PsaJ_sf"/>
</dbReference>
<dbReference type="PANTHER" id="PTHR36082">
    <property type="match status" value="1"/>
</dbReference>
<dbReference type="PANTHER" id="PTHR36082:SF2">
    <property type="entry name" value="PHOTOSYSTEM I REACTION CENTER SUBUNIT IX"/>
    <property type="match status" value="1"/>
</dbReference>
<dbReference type="Pfam" id="PF01701">
    <property type="entry name" value="PSI_PsaJ"/>
    <property type="match status" value="1"/>
</dbReference>
<dbReference type="SUPFAM" id="SSF81544">
    <property type="entry name" value="Subunit IX of photosystem I reaction centre, PsaJ"/>
    <property type="match status" value="1"/>
</dbReference>
<feature type="chain" id="PRO_0000207815" description="Photosystem I reaction center subunit IX">
    <location>
        <begin position="1"/>
        <end position="42"/>
    </location>
</feature>
<feature type="transmembrane region" description="Helical" evidence="1">
    <location>
        <begin position="7"/>
        <end position="27"/>
    </location>
</feature>
<comment type="function">
    <text evidence="1">May help in the organization of the PsaE and PsaF subunits.</text>
</comment>
<comment type="subcellular location">
    <subcellularLocation>
        <location evidence="1">Plastid</location>
        <location evidence="1">Chloroplast thylakoid membrane</location>
        <topology evidence="1">Single-pass membrane protein</topology>
    </subcellularLocation>
</comment>
<comment type="similarity">
    <text evidence="1">Belongs to the PsaJ family.</text>
</comment>